<protein>
    <recommendedName>
        <fullName>Myosin-4</fullName>
    </recommendedName>
    <alternativeName>
        <fullName>Myosin heavy chain 2b</fullName>
        <shortName>MyHC-2b</shortName>
    </alternativeName>
    <alternativeName>
        <fullName>Myosin heavy chain 4</fullName>
    </alternativeName>
</protein>
<gene>
    <name evidence="9" type="primary">Myh4</name>
</gene>
<comment type="function">
    <text evidence="8">Muscle contraction.</text>
</comment>
<comment type="subunit">
    <text evidence="8">Muscle myosin is a hexameric protein that consists of 2 heavy chain subunits (MHC), 2 alkali light chain subunits (MLC) and 2 regulatory light chain subunits (MLC-2).</text>
</comment>
<comment type="subcellular location">
    <subcellularLocation>
        <location>Cytoplasm</location>
        <location>Myofibril</location>
    </subcellularLocation>
    <text>Thick filaments of the myofibrils.</text>
</comment>
<comment type="domain">
    <text evidence="8">The rodlike tail sequence is highly repetitive, showing cycles of a 28-residue repeat pattern composed of 4 heptapeptides, characteristic for alpha-helical coiled coils.</text>
</comment>
<comment type="domain">
    <text evidence="8">Limited proteolysis of myosin heavy chain produces 1 light meromyosin (LMM) and 1 heavy meromyosin (HMM). HMM can be further cleaved into 2 globular subfragments (S1) and 1 rod-shaped subfragment (S2).</text>
</comment>
<comment type="similarity">
    <text evidence="8">Belongs to the TRAFAC class myosin-kinesin ATPase superfamily. Myosin family.</text>
</comment>
<comment type="caution">
    <text evidence="8">Represents a conventional myosin. This protein should not be confused with the unconventional myosin-4 (MYO4).</text>
</comment>
<reference key="1">
    <citation type="journal article" date="2004" name="Genome Res.">
        <title>The status, quality, and expansion of the NIH full-length cDNA project: the Mammalian Gene Collection (MGC).</title>
        <authorList>
            <consortium name="The MGC Project Team"/>
        </authorList>
    </citation>
    <scope>NUCLEOTIDE SEQUENCE [LARGE SCALE MRNA]</scope>
    <source>
        <tissue>Prostate</tissue>
    </source>
</reference>
<reference key="2">
    <citation type="journal article" date="2012" name="Nat. Commun.">
        <title>Quantitative maps of protein phosphorylation sites across 14 different rat organs and tissues.</title>
        <authorList>
            <person name="Lundby A."/>
            <person name="Secher A."/>
            <person name="Lage K."/>
            <person name="Nordsborg N.B."/>
            <person name="Dmytriyev A."/>
            <person name="Lundby C."/>
            <person name="Olsen J.V."/>
        </authorList>
    </citation>
    <scope>PHOSPHORYLATION [LARGE SCALE ANALYSIS] AT SER-36; THR-64; THR-69; SER-79; TYR-389; THR-391; SER-392; THR-419; TYR-424; SER-625; THR-776; SER-1092; SER-1096; SER-1162; SER-1237; THR-1241; SER-1243; THR-1255; SER-1261; THR-1265; SER-1278; THR-1286; SER-1288; SER-1292; SER-1303; SER-1306; SER-1413; TYR-1464; THR-1467; SER-1474; TYR-1492; SER-1495; THR-1501; SER-1514; THR-1517; SER-1542; SER-1547; SER-1554; SER-1574; SER-1600; SER-1603; SER-1714; SER-1726; THR-1730; THR-1736 AND SER-1739</scope>
    <scope>IDENTIFICATION BY MASS SPECTROMETRY [LARGE SCALE ANALYSIS]</scope>
</reference>
<organism>
    <name type="scientific">Rattus norvegicus</name>
    <name type="common">Rat</name>
    <dbReference type="NCBI Taxonomy" id="10116"/>
    <lineage>
        <taxon>Eukaryota</taxon>
        <taxon>Metazoa</taxon>
        <taxon>Chordata</taxon>
        <taxon>Craniata</taxon>
        <taxon>Vertebrata</taxon>
        <taxon>Euteleostomi</taxon>
        <taxon>Mammalia</taxon>
        <taxon>Eutheria</taxon>
        <taxon>Euarchontoglires</taxon>
        <taxon>Glires</taxon>
        <taxon>Rodentia</taxon>
        <taxon>Myomorpha</taxon>
        <taxon>Muroidea</taxon>
        <taxon>Muridae</taxon>
        <taxon>Murinae</taxon>
        <taxon>Rattus</taxon>
    </lineage>
</organism>
<sequence length="1939" mass="222880">MSSDAEMAVFGEAAPYLRKSEKERIEAQNKPFDAKSSVFVVDAKESYVKATVQSREGGKVTAKTEGGATVTVKEDQVFSMNPPKYDKIEDMAMMTHLHEPAVLYNLKERYAAWMIYTYSGLFCVTVNPYKWLPVYNPEVVAAYRGKKRQEAPPHIFSISDNAYQFMLTDRENQSILITGESGAGKTVNTKRVIQYFATIAVTGDKKKEEAPSGKMQGTLEDQIISANPLLEAFGNAKTVRNDNSSRFGKFIRIHFGATGKLASADIETYLLEKSRVTFQLKAERSYHIFYQVMSNKKPELIEMLLITTNPYDFAYVSQGEITVPSIDDQEELMATDTAVDILGFTADEKVAIYKLTGAVMHYGNMKFKQKQREEQAEPDGTEVADKAAYLTSLNSADLLKALCYPRVKVGNEYVTKGQTVQQVYNSVGALAKAMYEKMFLWMVTRINQQLDTKQPRQYFIGVLDIAGFEIFDFNTLEQLCINFTNEKLQQFFNHHMFVLEQEEYKKEGIEWEFIDFGMDLAACIELIEKPMGIFSILEEECMFPKATDTSFKNKLYEQHLGKSNNFQKPKPAKGKAEAHFSLVHYAGTVDYNIIGWLDKNKDPLNETVVGLYQKSGLKTLAFLFSGGQAAEAEGGGGKKGGKKKGSSFQTVSALFRENLNKLMTNLKSTHPHFVRCLIPNETKTPGAMEHELVLHQLRCNGVLEGIRICRKGFPSRILYADFKQRYKVLNASAIPEGQFIDSKKASEKLLGSIDIDHTQYKFGHTKVFFKAGLLGTLEEMRDEKLAQLITRTQAVCRGYLMRVEFRKMMERRESIFCIQYNVRAFMNVKHWPWMKLYFKIKPLLKSAETEKEMATMKEDFEKAKEDLAKSEAKRKELEEKMVALMQEKNDLQLQVQAEADGLADAEERCDQLIKTKIQLEAKIKELTERAEDEEEINAELTAKKRKLEDECSELKKDIDDLELTLAKVEKEKHATENKVKNLTEEMAGLDENIVKLTKEKKALQEAHQQTLDDLQAEEDKVNTLTKAKTKLEQQVDDLEGSLEQEKKLRMDLERAKRKLEGDLKLAQESTMDIENDKQQLDEKLKKKEFEMSNLQSKIEDEQALGMQLQKKIKELQARIEELEEEIEAERASRAKAEKQRSDLSRELEEISERLEEAGGATSAQIEMNKKREAEFQKMRRDLEEATLQHEATAAALRKKHADSVAELGEQIDNLQRVKQKLEKEKSELKMEIDDLASNMETVSKAKGNLEKMCRTLEDQLSEVKTKEEEQQRLINELSAQKARLHTESGEFSRQLDEKDAMVSQLSRGKQAFTQQIEELKRQLEEESKAKNALAHALQSARHDCDLLREQYEEEQEAKAELQRAMSKANSEVAQWRTKYETDAIQRTEELEEAKKKLAQRLQDAEEHVEAVNSKCASLEKTKQRLQNEVEDLMIDVERSNAACAALDKKQRNFDKVLAEWKQKYEETQAELEASQKESRSLSTELFKVKNAYEESLDQLETLKRENKNLQQEISDLTEQIAEGGKHIHELEKIKKQIDQEKSELQASLEEAEASLEHEEGKILRIQLELNQVKSEIDRKIAEKDEEIDQLKRNHLRVVESMQSTLDAEIRSRNDALRIKKKMEGDLNEMEIQLNHANRQAAEAIRNLRNTQGMLKDTQLHLDDALRGQDDLKEQLAMVERRANLMQAEIEELRASLEQTERSRRVAEQELLDASERVQLLHTQNTSLINTKKKLETDISQIQGEMEDIVQEARNAEEKAKKAITDAAMMAEELKKEQDTSAHLERMKKNMEQTVKDLQHRLDEAEQLALKGGKKQIQKLEARVRELENEVENEQKRNIEAVKGLRKHERRVKELTYQTEEDRKNVLRLQDLVDKLQTKVKAYKRQAEEAEEQSNVNLAKFRKIQHELEEAEERADIAESQVNKLRVKSREVHTKVISEE</sequence>
<dbReference type="EMBL" id="BC113948">
    <property type="protein sequence ID" value="AAI13949.1"/>
    <property type="molecule type" value="mRNA"/>
</dbReference>
<dbReference type="RefSeq" id="NP_062198.1">
    <property type="nucleotide sequence ID" value="NM_019325.1"/>
</dbReference>
<dbReference type="SMR" id="Q29RW1"/>
<dbReference type="BioGRID" id="262010">
    <property type="interactions" value="2"/>
</dbReference>
<dbReference type="FunCoup" id="Q29RW1">
    <property type="interactions" value="315"/>
</dbReference>
<dbReference type="IntAct" id="Q29RW1">
    <property type="interactions" value="1"/>
</dbReference>
<dbReference type="STRING" id="10116.ENSRNOP00000004295"/>
<dbReference type="GlyGen" id="Q29RW1">
    <property type="glycosylation" value="1 site, 1 O-linked glycan (1 site)"/>
</dbReference>
<dbReference type="iPTMnet" id="Q29RW1"/>
<dbReference type="PhosphoSitePlus" id="Q29RW1"/>
<dbReference type="PaxDb" id="10116-ENSRNOP00000046362"/>
<dbReference type="ABCD" id="Q29RW1">
    <property type="antibodies" value="1 sequenced antibody"/>
</dbReference>
<dbReference type="GeneID" id="360543"/>
<dbReference type="KEGG" id="rno:360543"/>
<dbReference type="UCSC" id="RGD:3139">
    <property type="organism name" value="rat"/>
</dbReference>
<dbReference type="AGR" id="RGD:3139"/>
<dbReference type="CTD" id="4622"/>
<dbReference type="RGD" id="3139">
    <property type="gene designation" value="Myh4"/>
</dbReference>
<dbReference type="eggNOG" id="KOG0161">
    <property type="taxonomic scope" value="Eukaryota"/>
</dbReference>
<dbReference type="InParanoid" id="Q29RW1"/>
<dbReference type="OrthoDB" id="59859at9989"/>
<dbReference type="PRO" id="PR:Q29RW1"/>
<dbReference type="Proteomes" id="UP000002494">
    <property type="component" value="Unplaced"/>
</dbReference>
<dbReference type="GO" id="GO:0005737">
    <property type="term" value="C:cytoplasm"/>
    <property type="evidence" value="ECO:0000318"/>
    <property type="project" value="GO_Central"/>
</dbReference>
<dbReference type="GO" id="GO:0030016">
    <property type="term" value="C:myofibril"/>
    <property type="evidence" value="ECO:0000266"/>
    <property type="project" value="RGD"/>
</dbReference>
<dbReference type="GO" id="GO:0032982">
    <property type="term" value="C:myosin filament"/>
    <property type="evidence" value="ECO:0000318"/>
    <property type="project" value="GO_Central"/>
</dbReference>
<dbReference type="GO" id="GO:0016460">
    <property type="term" value="C:myosin II complex"/>
    <property type="evidence" value="ECO:0000318"/>
    <property type="project" value="GO_Central"/>
</dbReference>
<dbReference type="GO" id="GO:0051015">
    <property type="term" value="F:actin filament binding"/>
    <property type="evidence" value="ECO:0000318"/>
    <property type="project" value="GO_Central"/>
</dbReference>
<dbReference type="GO" id="GO:0005524">
    <property type="term" value="F:ATP binding"/>
    <property type="evidence" value="ECO:0007669"/>
    <property type="project" value="UniProtKB-KW"/>
</dbReference>
<dbReference type="GO" id="GO:0005516">
    <property type="term" value="F:calmodulin binding"/>
    <property type="evidence" value="ECO:0007669"/>
    <property type="project" value="UniProtKB-KW"/>
</dbReference>
<dbReference type="GO" id="GO:0003725">
    <property type="term" value="F:double-stranded RNA binding"/>
    <property type="evidence" value="ECO:0000266"/>
    <property type="project" value="RGD"/>
</dbReference>
<dbReference type="GO" id="GO:0000146">
    <property type="term" value="F:microfilament motor activity"/>
    <property type="evidence" value="ECO:0000318"/>
    <property type="project" value="GO_Central"/>
</dbReference>
<dbReference type="GO" id="GO:0006936">
    <property type="term" value="P:muscle contraction"/>
    <property type="evidence" value="ECO:0000266"/>
    <property type="project" value="RGD"/>
</dbReference>
<dbReference type="GO" id="GO:0061061">
    <property type="term" value="P:muscle structure development"/>
    <property type="evidence" value="ECO:0000270"/>
    <property type="project" value="RGD"/>
</dbReference>
<dbReference type="GO" id="GO:0009629">
    <property type="term" value="P:response to gravity"/>
    <property type="evidence" value="ECO:0000270"/>
    <property type="project" value="RGD"/>
</dbReference>
<dbReference type="GO" id="GO:0014850">
    <property type="term" value="P:response to muscle activity"/>
    <property type="evidence" value="ECO:0000270"/>
    <property type="project" value="RGD"/>
</dbReference>
<dbReference type="GO" id="GO:0035994">
    <property type="term" value="P:response to muscle stretch"/>
    <property type="evidence" value="ECO:0000270"/>
    <property type="project" value="RGD"/>
</dbReference>
<dbReference type="CDD" id="cd14915">
    <property type="entry name" value="MYSc_Myh4"/>
    <property type="match status" value="1"/>
</dbReference>
<dbReference type="FunFam" id="1.10.10.820:FF:000001">
    <property type="entry name" value="Myosin heavy chain"/>
    <property type="match status" value="1"/>
</dbReference>
<dbReference type="FunFam" id="1.20.5.340:FF:000002">
    <property type="entry name" value="Myosin heavy chain"/>
    <property type="match status" value="1"/>
</dbReference>
<dbReference type="FunFam" id="1.20.5.340:FF:000003">
    <property type="entry name" value="Myosin heavy chain"/>
    <property type="match status" value="1"/>
</dbReference>
<dbReference type="FunFam" id="1.20.5.340:FF:000004">
    <property type="entry name" value="Myosin heavy chain"/>
    <property type="match status" value="1"/>
</dbReference>
<dbReference type="FunFam" id="1.20.5.340:FF:000006">
    <property type="entry name" value="Myosin heavy chain"/>
    <property type="match status" value="1"/>
</dbReference>
<dbReference type="FunFam" id="1.20.5.340:FF:000013">
    <property type="entry name" value="Myosin heavy chain"/>
    <property type="match status" value="1"/>
</dbReference>
<dbReference type="FunFam" id="1.20.5.370:FF:000001">
    <property type="entry name" value="Myosin heavy chain"/>
    <property type="match status" value="1"/>
</dbReference>
<dbReference type="FunFam" id="1.20.5.370:FF:000002">
    <property type="entry name" value="Myosin heavy chain"/>
    <property type="match status" value="1"/>
</dbReference>
<dbReference type="FunFam" id="1.20.5.370:FF:000003">
    <property type="entry name" value="Myosin heavy chain"/>
    <property type="match status" value="1"/>
</dbReference>
<dbReference type="FunFam" id="1.20.5.370:FF:000007">
    <property type="entry name" value="Myosin heavy chain"/>
    <property type="match status" value="1"/>
</dbReference>
<dbReference type="FunFam" id="1.20.5.370:FF:000008">
    <property type="entry name" value="Myosin heavy chain"/>
    <property type="match status" value="1"/>
</dbReference>
<dbReference type="FunFam" id="1.20.5.4820:FF:000001">
    <property type="entry name" value="Myosin heavy chain"/>
    <property type="match status" value="1"/>
</dbReference>
<dbReference type="FunFam" id="1.20.58.530:FF:000001">
    <property type="entry name" value="Myosin heavy chain"/>
    <property type="match status" value="1"/>
</dbReference>
<dbReference type="FunFam" id="2.30.30.360:FF:000001">
    <property type="entry name" value="Myosin heavy chain"/>
    <property type="match status" value="1"/>
</dbReference>
<dbReference type="FunFam" id="3.40.850.10:FF:000024">
    <property type="entry name" value="Myosin heavy chain, isoform J"/>
    <property type="match status" value="1"/>
</dbReference>
<dbReference type="FunFam" id="1.20.120.720:FF:000001">
    <property type="entry name" value="Myosin heavy chain, muscle"/>
    <property type="match status" value="1"/>
</dbReference>
<dbReference type="Gene3D" id="1.10.10.820">
    <property type="match status" value="1"/>
</dbReference>
<dbReference type="Gene3D" id="1.20.5.340">
    <property type="match status" value="5"/>
</dbReference>
<dbReference type="Gene3D" id="1.20.5.370">
    <property type="match status" value="4"/>
</dbReference>
<dbReference type="Gene3D" id="1.20.5.4820">
    <property type="match status" value="1"/>
</dbReference>
<dbReference type="Gene3D" id="1.20.58.530">
    <property type="match status" value="1"/>
</dbReference>
<dbReference type="Gene3D" id="6.10.250.2420">
    <property type="match status" value="1"/>
</dbReference>
<dbReference type="Gene3D" id="3.40.850.10">
    <property type="entry name" value="Kinesin motor domain"/>
    <property type="match status" value="1"/>
</dbReference>
<dbReference type="Gene3D" id="2.30.30.360">
    <property type="entry name" value="Myosin S1 fragment, N-terminal"/>
    <property type="match status" value="1"/>
</dbReference>
<dbReference type="Gene3D" id="1.20.120.720">
    <property type="entry name" value="Myosin VI head, motor domain, U50 subdomain"/>
    <property type="match status" value="1"/>
</dbReference>
<dbReference type="InterPro" id="IPR036961">
    <property type="entry name" value="Kinesin_motor_dom_sf"/>
</dbReference>
<dbReference type="InterPro" id="IPR001609">
    <property type="entry name" value="Myosin_head_motor_dom-like"/>
</dbReference>
<dbReference type="InterPro" id="IPR004009">
    <property type="entry name" value="Myosin_N"/>
</dbReference>
<dbReference type="InterPro" id="IPR008989">
    <property type="entry name" value="Myosin_S1_N"/>
</dbReference>
<dbReference type="InterPro" id="IPR002928">
    <property type="entry name" value="Myosin_tail"/>
</dbReference>
<dbReference type="InterPro" id="IPR027417">
    <property type="entry name" value="P-loop_NTPase"/>
</dbReference>
<dbReference type="InterPro" id="IPR014751">
    <property type="entry name" value="XRCC4-like_C"/>
</dbReference>
<dbReference type="PANTHER" id="PTHR45615">
    <property type="entry name" value="MYOSIN HEAVY CHAIN, NON-MUSCLE"/>
    <property type="match status" value="1"/>
</dbReference>
<dbReference type="PANTHER" id="PTHR45615:SF79">
    <property type="entry name" value="MYOSIN-4"/>
    <property type="match status" value="1"/>
</dbReference>
<dbReference type="Pfam" id="PF00063">
    <property type="entry name" value="Myosin_head"/>
    <property type="match status" value="1"/>
</dbReference>
<dbReference type="Pfam" id="PF02736">
    <property type="entry name" value="Myosin_N"/>
    <property type="match status" value="1"/>
</dbReference>
<dbReference type="Pfam" id="PF01576">
    <property type="entry name" value="Myosin_tail_1"/>
    <property type="match status" value="1"/>
</dbReference>
<dbReference type="PRINTS" id="PR00193">
    <property type="entry name" value="MYOSINHEAVY"/>
</dbReference>
<dbReference type="SMART" id="SM00242">
    <property type="entry name" value="MYSc"/>
    <property type="match status" value="1"/>
</dbReference>
<dbReference type="SUPFAM" id="SSF90257">
    <property type="entry name" value="Myosin rod fragments"/>
    <property type="match status" value="5"/>
</dbReference>
<dbReference type="SUPFAM" id="SSF52540">
    <property type="entry name" value="P-loop containing nucleoside triphosphate hydrolases"/>
    <property type="match status" value="1"/>
</dbReference>
<dbReference type="SUPFAM" id="SSF57997">
    <property type="entry name" value="Tropomyosin"/>
    <property type="match status" value="2"/>
</dbReference>
<dbReference type="PROSITE" id="PS50096">
    <property type="entry name" value="IQ"/>
    <property type="match status" value="1"/>
</dbReference>
<dbReference type="PROSITE" id="PS51456">
    <property type="entry name" value="MYOSIN_MOTOR"/>
    <property type="match status" value="1"/>
</dbReference>
<dbReference type="PROSITE" id="PS51844">
    <property type="entry name" value="SH3_LIKE"/>
    <property type="match status" value="1"/>
</dbReference>
<proteinExistence type="evidence at protein level"/>
<evidence type="ECO:0000250" key="1"/>
<evidence type="ECO:0000250" key="2">
    <source>
        <dbReference type="UniProtKB" id="Q28641"/>
    </source>
</evidence>
<evidence type="ECO:0000255" key="3"/>
<evidence type="ECO:0000255" key="4">
    <source>
        <dbReference type="PROSITE-ProRule" id="PRU00116"/>
    </source>
</evidence>
<evidence type="ECO:0000255" key="5">
    <source>
        <dbReference type="PROSITE-ProRule" id="PRU00782"/>
    </source>
</evidence>
<evidence type="ECO:0000255" key="6">
    <source>
        <dbReference type="PROSITE-ProRule" id="PRU01190"/>
    </source>
</evidence>
<evidence type="ECO:0000256" key="7">
    <source>
        <dbReference type="SAM" id="MobiDB-lite"/>
    </source>
</evidence>
<evidence type="ECO:0000305" key="8"/>
<evidence type="ECO:0000312" key="9">
    <source>
        <dbReference type="RGD" id="3139"/>
    </source>
</evidence>
<evidence type="ECO:0007744" key="10">
    <source>
    </source>
</evidence>
<keyword id="KW-0009">Actin-binding</keyword>
<keyword id="KW-0067">ATP-binding</keyword>
<keyword id="KW-0112">Calmodulin-binding</keyword>
<keyword id="KW-0175">Coiled coil</keyword>
<keyword id="KW-0963">Cytoplasm</keyword>
<keyword id="KW-0488">Methylation</keyword>
<keyword id="KW-0505">Motor protein</keyword>
<keyword id="KW-0514">Muscle protein</keyword>
<keyword id="KW-0518">Myosin</keyword>
<keyword id="KW-0547">Nucleotide-binding</keyword>
<keyword id="KW-0597">Phosphoprotein</keyword>
<keyword id="KW-1185">Reference proteome</keyword>
<keyword id="KW-0787">Thick filament</keyword>
<name>MYH4_RAT</name>
<feature type="chain" id="PRO_0000240600" description="Myosin-4">
    <location>
        <begin position="1"/>
        <end position="1939"/>
    </location>
</feature>
<feature type="domain" description="Myosin N-terminal SH3-like" evidence="6">
    <location>
        <begin position="33"/>
        <end position="82"/>
    </location>
</feature>
<feature type="domain" description="Myosin motor" evidence="5">
    <location>
        <begin position="86"/>
        <end position="782"/>
    </location>
</feature>
<feature type="domain" description="IQ" evidence="4">
    <location>
        <begin position="785"/>
        <end position="814"/>
    </location>
</feature>
<feature type="region of interest" description="Actin-binding" evidence="1">
    <location>
        <begin position="659"/>
        <end position="681"/>
    </location>
</feature>
<feature type="region of interest" description="Actin-binding" evidence="1">
    <location>
        <begin position="761"/>
        <end position="775"/>
    </location>
</feature>
<feature type="region of interest" description="Disordered" evidence="7">
    <location>
        <begin position="1128"/>
        <end position="1147"/>
    </location>
</feature>
<feature type="region of interest" description="Disordered" evidence="7">
    <location>
        <begin position="1153"/>
        <end position="1172"/>
    </location>
</feature>
<feature type="coiled-coil region" evidence="3">
    <location>
        <begin position="843"/>
        <end position="1939"/>
    </location>
</feature>
<feature type="binding site" evidence="3">
    <location>
        <begin position="179"/>
        <end position="186"/>
    </location>
    <ligand>
        <name>ATP</name>
        <dbReference type="ChEBI" id="CHEBI:30616"/>
    </ligand>
</feature>
<feature type="modified residue" description="Phosphoserine" evidence="10">
    <location>
        <position position="36"/>
    </location>
</feature>
<feature type="modified residue" description="Phosphothreonine" evidence="10">
    <location>
        <position position="64"/>
    </location>
</feature>
<feature type="modified residue" description="Phosphothreonine" evidence="10">
    <location>
        <position position="69"/>
    </location>
</feature>
<feature type="modified residue" description="Phosphoserine" evidence="10">
    <location>
        <position position="79"/>
    </location>
</feature>
<feature type="modified residue" description="N6,N6,N6-trimethyllysine" evidence="3">
    <location>
        <position position="130"/>
    </location>
</feature>
<feature type="modified residue" description="Phosphotyrosine" evidence="10">
    <location>
        <position position="389"/>
    </location>
</feature>
<feature type="modified residue" description="Phosphothreonine" evidence="10">
    <location>
        <position position="391"/>
    </location>
</feature>
<feature type="modified residue" description="Phosphoserine" evidence="10">
    <location>
        <position position="392"/>
    </location>
</feature>
<feature type="modified residue" description="Phosphothreonine" evidence="10">
    <location>
        <position position="419"/>
    </location>
</feature>
<feature type="modified residue" description="Phosphotyrosine" evidence="10">
    <location>
        <position position="424"/>
    </location>
</feature>
<feature type="modified residue" description="Phosphoserine" evidence="10">
    <location>
        <position position="625"/>
    </location>
</feature>
<feature type="modified residue" description="Pros-methylhistidine" evidence="2">
    <location>
        <position position="757"/>
    </location>
</feature>
<feature type="modified residue" description="Phosphothreonine" evidence="10">
    <location>
        <position position="776"/>
    </location>
</feature>
<feature type="modified residue" description="Phosphoserine" evidence="10">
    <location>
        <position position="1092"/>
    </location>
</feature>
<feature type="modified residue" description="Phosphoserine" evidence="10">
    <location>
        <position position="1096"/>
    </location>
</feature>
<feature type="modified residue" description="Phosphoserine" evidence="10">
    <location>
        <position position="1162"/>
    </location>
</feature>
<feature type="modified residue" description="Phosphoserine" evidence="10">
    <location>
        <position position="1237"/>
    </location>
</feature>
<feature type="modified residue" description="Phosphothreonine" evidence="10">
    <location>
        <position position="1241"/>
    </location>
</feature>
<feature type="modified residue" description="Phosphoserine" evidence="10">
    <location>
        <position position="1243"/>
    </location>
</feature>
<feature type="modified residue" description="Phosphothreonine" evidence="10">
    <location>
        <position position="1255"/>
    </location>
</feature>
<feature type="modified residue" description="Phosphoserine" evidence="10">
    <location>
        <position position="1261"/>
    </location>
</feature>
<feature type="modified residue" description="Phosphothreonine" evidence="10">
    <location>
        <position position="1265"/>
    </location>
</feature>
<feature type="modified residue" description="Phosphoserine" evidence="10">
    <location>
        <position position="1278"/>
    </location>
</feature>
<feature type="modified residue" description="Phosphothreonine" evidence="10">
    <location>
        <position position="1286"/>
    </location>
</feature>
<feature type="modified residue" description="Phosphoserine" evidence="10">
    <location>
        <position position="1288"/>
    </location>
</feature>
<feature type="modified residue" description="Phosphoserine" evidence="10">
    <location>
        <position position="1292"/>
    </location>
</feature>
<feature type="modified residue" description="Phosphoserine" evidence="10">
    <location>
        <position position="1303"/>
    </location>
</feature>
<feature type="modified residue" description="Phosphoserine" evidence="10">
    <location>
        <position position="1306"/>
    </location>
</feature>
<feature type="modified residue" description="Phosphoserine" evidence="10">
    <location>
        <position position="1413"/>
    </location>
</feature>
<feature type="modified residue" description="Phosphotyrosine" evidence="10">
    <location>
        <position position="1464"/>
    </location>
</feature>
<feature type="modified residue" description="Phosphothreonine" evidence="10">
    <location>
        <position position="1467"/>
    </location>
</feature>
<feature type="modified residue" description="Phosphoserine" evidence="10">
    <location>
        <position position="1474"/>
    </location>
</feature>
<feature type="modified residue" description="Phosphotyrosine" evidence="10">
    <location>
        <position position="1492"/>
    </location>
</feature>
<feature type="modified residue" description="Phosphoserine" evidence="10">
    <location>
        <position position="1495"/>
    </location>
</feature>
<feature type="modified residue" description="Phosphothreonine" evidence="10">
    <location>
        <position position="1501"/>
    </location>
</feature>
<feature type="modified residue" description="Phosphoserine" evidence="10">
    <location>
        <position position="1514"/>
    </location>
</feature>
<feature type="modified residue" description="Phosphothreonine" evidence="10">
    <location>
        <position position="1517"/>
    </location>
</feature>
<feature type="modified residue" description="Phosphoserine" evidence="10">
    <location>
        <position position="1542"/>
    </location>
</feature>
<feature type="modified residue" description="Phosphoserine" evidence="10">
    <location>
        <position position="1547"/>
    </location>
</feature>
<feature type="modified residue" description="Phosphoserine" evidence="10">
    <location>
        <position position="1554"/>
    </location>
</feature>
<feature type="modified residue" description="Phosphoserine" evidence="10">
    <location>
        <position position="1574"/>
    </location>
</feature>
<feature type="modified residue" description="Phosphoserine" evidence="10">
    <location>
        <position position="1600"/>
    </location>
</feature>
<feature type="modified residue" description="Phosphoserine" evidence="10">
    <location>
        <position position="1603"/>
    </location>
</feature>
<feature type="modified residue" description="Phosphoserine" evidence="10">
    <location>
        <position position="1714"/>
    </location>
</feature>
<feature type="modified residue" description="Phosphoserine" evidence="10">
    <location>
        <position position="1726"/>
    </location>
</feature>
<feature type="modified residue" description="Phosphothreonine" evidence="10">
    <location>
        <position position="1730"/>
    </location>
</feature>
<feature type="modified residue" description="Phosphothreonine" evidence="10">
    <location>
        <position position="1736"/>
    </location>
</feature>
<feature type="modified residue" description="Phosphoserine" evidence="10">
    <location>
        <position position="1739"/>
    </location>
</feature>
<accession>Q29RW1</accession>